<accession>P0ABM4</accession>
<accession>P33929</accession>
<gene>
    <name type="primary">ccmC</name>
    <name type="ordered locus">SF2283</name>
    <name type="ordered locus">S2413</name>
</gene>
<name>CCMC_SHIFL</name>
<comment type="function">
    <text evidence="1">Required for the export of heme to the periplasm for the biogenesis of c-type cytochromes.</text>
</comment>
<comment type="subcellular location">
    <subcellularLocation>
        <location evidence="1">Cell inner membrane</location>
        <topology evidence="1">Multi-pass membrane protein</topology>
    </subcellularLocation>
</comment>
<comment type="similarity">
    <text evidence="3">Belongs to the CcmC/CycZ/HelC family.</text>
</comment>
<organism>
    <name type="scientific">Shigella flexneri</name>
    <dbReference type="NCBI Taxonomy" id="623"/>
    <lineage>
        <taxon>Bacteria</taxon>
        <taxon>Pseudomonadati</taxon>
        <taxon>Pseudomonadota</taxon>
        <taxon>Gammaproteobacteria</taxon>
        <taxon>Enterobacterales</taxon>
        <taxon>Enterobacteriaceae</taxon>
        <taxon>Shigella</taxon>
    </lineage>
</organism>
<feature type="chain" id="PRO_0000201554" description="Heme exporter protein C">
    <location>
        <begin position="1"/>
        <end position="245"/>
    </location>
</feature>
<feature type="topological domain" description="Cytoplasmic" evidence="2">
    <location>
        <begin position="1"/>
        <end position="20"/>
    </location>
</feature>
<feature type="transmembrane region" description="Helical" evidence="2">
    <location>
        <begin position="21"/>
        <end position="41"/>
    </location>
</feature>
<feature type="topological domain" description="Periplasmic" evidence="2">
    <location>
        <begin position="42"/>
        <end position="63"/>
    </location>
</feature>
<feature type="transmembrane region" description="Helical" evidence="2">
    <location>
        <begin position="64"/>
        <end position="84"/>
    </location>
</feature>
<feature type="topological domain" description="Cytoplasmic" evidence="2">
    <location>
        <begin position="85"/>
        <end position="90"/>
    </location>
</feature>
<feature type="transmembrane region" description="Helical" evidence="2">
    <location>
        <begin position="91"/>
        <end position="111"/>
    </location>
</feature>
<feature type="topological domain" description="Periplasmic" evidence="2">
    <location>
        <begin position="112"/>
        <end position="128"/>
    </location>
</feature>
<feature type="transmembrane region" description="Helical" evidence="2">
    <location>
        <begin position="129"/>
        <end position="149"/>
    </location>
</feature>
<feature type="topological domain" description="Cytoplasmic" evidence="2">
    <location>
        <begin position="150"/>
        <end position="159"/>
    </location>
</feature>
<feature type="transmembrane region" description="Helical" evidence="2">
    <location>
        <begin position="160"/>
        <end position="180"/>
    </location>
</feature>
<feature type="topological domain" description="Periplasmic" evidence="2">
    <location>
        <begin position="181"/>
        <end position="205"/>
    </location>
</feature>
<feature type="transmembrane region" description="Helical" evidence="2">
    <location>
        <begin position="206"/>
        <end position="226"/>
    </location>
</feature>
<feature type="topological domain" description="Cytoplasmic" evidence="2">
    <location>
        <begin position="227"/>
        <end position="245"/>
    </location>
</feature>
<dbReference type="EMBL" id="AE005674">
    <property type="protein sequence ID" value="AAN43802.2"/>
    <property type="molecule type" value="Genomic_DNA"/>
</dbReference>
<dbReference type="EMBL" id="AE014073">
    <property type="protein sequence ID" value="AAP17619.1"/>
    <property type="molecule type" value="Genomic_DNA"/>
</dbReference>
<dbReference type="RefSeq" id="NP_708095.2">
    <property type="nucleotide sequence ID" value="NC_004337.2"/>
</dbReference>
<dbReference type="RefSeq" id="WP_001295447.1">
    <property type="nucleotide sequence ID" value="NZ_WHSI01000015.1"/>
</dbReference>
<dbReference type="SMR" id="P0ABM4"/>
<dbReference type="STRING" id="198214.SF2283"/>
<dbReference type="PaxDb" id="198214-SF2283"/>
<dbReference type="GeneID" id="1027271"/>
<dbReference type="GeneID" id="93774979"/>
<dbReference type="KEGG" id="sfl:SF2283"/>
<dbReference type="KEGG" id="sfx:S2413"/>
<dbReference type="PATRIC" id="fig|198214.7.peg.2734"/>
<dbReference type="HOGENOM" id="CLU_066538_2_0_6"/>
<dbReference type="Proteomes" id="UP000001006">
    <property type="component" value="Chromosome"/>
</dbReference>
<dbReference type="Proteomes" id="UP000002673">
    <property type="component" value="Chromosome"/>
</dbReference>
<dbReference type="GO" id="GO:0005886">
    <property type="term" value="C:plasma membrane"/>
    <property type="evidence" value="ECO:0007669"/>
    <property type="project" value="UniProtKB-SubCell"/>
</dbReference>
<dbReference type="GO" id="GO:0020037">
    <property type="term" value="F:heme binding"/>
    <property type="evidence" value="ECO:0007669"/>
    <property type="project" value="InterPro"/>
</dbReference>
<dbReference type="GO" id="GO:0015232">
    <property type="term" value="F:heme transmembrane transporter activity"/>
    <property type="evidence" value="ECO:0007669"/>
    <property type="project" value="InterPro"/>
</dbReference>
<dbReference type="GO" id="GO:0017004">
    <property type="term" value="P:cytochrome complex assembly"/>
    <property type="evidence" value="ECO:0007669"/>
    <property type="project" value="UniProtKB-KW"/>
</dbReference>
<dbReference type="InterPro" id="IPR002541">
    <property type="entry name" value="Cyt_c_assembly"/>
</dbReference>
<dbReference type="InterPro" id="IPR003557">
    <property type="entry name" value="Cyt_c_biogenesis_CcmC"/>
</dbReference>
<dbReference type="InterPro" id="IPR045062">
    <property type="entry name" value="Cyt_c_biogenesis_CcsA/CcmC"/>
</dbReference>
<dbReference type="NCBIfam" id="TIGR01191">
    <property type="entry name" value="ccmC"/>
    <property type="match status" value="1"/>
</dbReference>
<dbReference type="PANTHER" id="PTHR30071:SF1">
    <property type="entry name" value="CYTOCHROME B_B6 PROTEIN-RELATED"/>
    <property type="match status" value="1"/>
</dbReference>
<dbReference type="PANTHER" id="PTHR30071">
    <property type="entry name" value="HEME EXPORTER PROTEIN C"/>
    <property type="match status" value="1"/>
</dbReference>
<dbReference type="Pfam" id="PF01578">
    <property type="entry name" value="Cytochrom_C_asm"/>
    <property type="match status" value="1"/>
</dbReference>
<dbReference type="PRINTS" id="PR01386">
    <property type="entry name" value="CCMCBIOGNSIS"/>
</dbReference>
<protein>
    <recommendedName>
        <fullName>Heme exporter protein C</fullName>
    </recommendedName>
    <alternativeName>
        <fullName>Cytochrome c-type biogenesis protein CcmC</fullName>
    </alternativeName>
</protein>
<evidence type="ECO:0000250" key="1"/>
<evidence type="ECO:0000255" key="2"/>
<evidence type="ECO:0000305" key="3"/>
<proteinExistence type="inferred from homology"/>
<keyword id="KW-0997">Cell inner membrane</keyword>
<keyword id="KW-1003">Cell membrane</keyword>
<keyword id="KW-0201">Cytochrome c-type biogenesis</keyword>
<keyword id="KW-0472">Membrane</keyword>
<keyword id="KW-1185">Reference proteome</keyword>
<keyword id="KW-0812">Transmembrane</keyword>
<keyword id="KW-1133">Transmembrane helix</keyword>
<keyword id="KW-0813">Transport</keyword>
<sequence length="245" mass="27885">MWKTLHQLAIPPRLYQICGWFIPWLAIASVVVLTVGWIWGFGFAPADYQQGNSYRIIYLHVPAAIWSMGIYASMAVAAFIGLVWQMKMANLAVAAMAPIGAVFTFIALVTGSAWGKPMWGTWWVWDARLTSELVLLFLYVGVIALWHAFDDRRLAGRAAGILVLIGVVNLPIIHYSVEWWNTLHQGSTRMQQSIDPAMRSPLRWSIFGFLLLSATLTLMRMRNLILLMEKRRPWVSELILKRGRK</sequence>
<reference key="1">
    <citation type="journal article" date="2002" name="Nucleic Acids Res.">
        <title>Genome sequence of Shigella flexneri 2a: insights into pathogenicity through comparison with genomes of Escherichia coli K12 and O157.</title>
        <authorList>
            <person name="Jin Q."/>
            <person name="Yuan Z."/>
            <person name="Xu J."/>
            <person name="Wang Y."/>
            <person name="Shen Y."/>
            <person name="Lu W."/>
            <person name="Wang J."/>
            <person name="Liu H."/>
            <person name="Yang J."/>
            <person name="Yang F."/>
            <person name="Zhang X."/>
            <person name="Zhang J."/>
            <person name="Yang G."/>
            <person name="Wu H."/>
            <person name="Qu D."/>
            <person name="Dong J."/>
            <person name="Sun L."/>
            <person name="Xue Y."/>
            <person name="Zhao A."/>
            <person name="Gao Y."/>
            <person name="Zhu J."/>
            <person name="Kan B."/>
            <person name="Ding K."/>
            <person name="Chen S."/>
            <person name="Cheng H."/>
            <person name="Yao Z."/>
            <person name="He B."/>
            <person name="Chen R."/>
            <person name="Ma D."/>
            <person name="Qiang B."/>
            <person name="Wen Y."/>
            <person name="Hou Y."/>
            <person name="Yu J."/>
        </authorList>
    </citation>
    <scope>NUCLEOTIDE SEQUENCE [LARGE SCALE GENOMIC DNA]</scope>
    <source>
        <strain>301 / Serotype 2a</strain>
    </source>
</reference>
<reference key="2">
    <citation type="journal article" date="2003" name="Infect. Immun.">
        <title>Complete genome sequence and comparative genomics of Shigella flexneri serotype 2a strain 2457T.</title>
        <authorList>
            <person name="Wei J."/>
            <person name="Goldberg M.B."/>
            <person name="Burland V."/>
            <person name="Venkatesan M.M."/>
            <person name="Deng W."/>
            <person name="Fournier G."/>
            <person name="Mayhew G.F."/>
            <person name="Plunkett G. III"/>
            <person name="Rose D.J."/>
            <person name="Darling A."/>
            <person name="Mau B."/>
            <person name="Perna N.T."/>
            <person name="Payne S.M."/>
            <person name="Runyen-Janecky L.J."/>
            <person name="Zhou S."/>
            <person name="Schwartz D.C."/>
            <person name="Blattner F.R."/>
        </authorList>
    </citation>
    <scope>NUCLEOTIDE SEQUENCE [LARGE SCALE GENOMIC DNA]</scope>
    <source>
        <strain>ATCC 700930 / 2457T / Serotype 2a</strain>
    </source>
</reference>